<evidence type="ECO:0000250" key="1"/>
<evidence type="ECO:0000305" key="2"/>
<proteinExistence type="inferred from homology"/>
<gene>
    <name type="primary">rtpR</name>
    <name type="ordered locus">LVIS_1898</name>
</gene>
<name>RTPR_LEVBA</name>
<dbReference type="EC" id="1.17.4.2"/>
<dbReference type="EMBL" id="CP000416">
    <property type="protein sequence ID" value="ABJ64958.1"/>
    <property type="molecule type" value="Genomic_DNA"/>
</dbReference>
<dbReference type="SMR" id="Q03PB4"/>
<dbReference type="STRING" id="387344.LVIS_1898"/>
<dbReference type="KEGG" id="lbr:LVIS_1898"/>
<dbReference type="PATRIC" id="fig|387344.15.peg.1805"/>
<dbReference type="eggNOG" id="COG0209">
    <property type="taxonomic scope" value="Bacteria"/>
</dbReference>
<dbReference type="HOGENOM" id="CLU_002384_0_0_9"/>
<dbReference type="Proteomes" id="UP000001652">
    <property type="component" value="Chromosome"/>
</dbReference>
<dbReference type="GO" id="GO:0031419">
    <property type="term" value="F:cobalamin binding"/>
    <property type="evidence" value="ECO:0007669"/>
    <property type="project" value="UniProtKB-KW"/>
</dbReference>
<dbReference type="GO" id="GO:0000166">
    <property type="term" value="F:nucleotide binding"/>
    <property type="evidence" value="ECO:0007669"/>
    <property type="project" value="InterPro"/>
</dbReference>
<dbReference type="GO" id="GO:0004748">
    <property type="term" value="F:ribonucleoside-diphosphate reductase activity, thioredoxin disulfide as acceptor"/>
    <property type="evidence" value="ECO:0007669"/>
    <property type="project" value="InterPro"/>
</dbReference>
<dbReference type="GO" id="GO:0008998">
    <property type="term" value="F:ribonucleoside-triphosphate reductase (thioredoxin) activity"/>
    <property type="evidence" value="ECO:0007669"/>
    <property type="project" value="UniProtKB-EC"/>
</dbReference>
<dbReference type="GO" id="GO:0006260">
    <property type="term" value="P:DNA replication"/>
    <property type="evidence" value="ECO:0007669"/>
    <property type="project" value="UniProtKB-KW"/>
</dbReference>
<dbReference type="Gene3D" id="3.20.70.20">
    <property type="match status" value="1"/>
</dbReference>
<dbReference type="Gene3D" id="3.30.1620.10">
    <property type="entry name" value="b-12 dependent (class ii) ribonucleotide reductase, Chain A, Domain 2"/>
    <property type="match status" value="1"/>
</dbReference>
<dbReference type="Gene3D" id="3.90.1390.10">
    <property type="entry name" value="b-12 dependent (class ii) ribonucleotide reductase, chain A, domain 3"/>
    <property type="match status" value="1"/>
</dbReference>
<dbReference type="InterPro" id="IPR050862">
    <property type="entry name" value="RdRp_reductase_class-2"/>
</dbReference>
<dbReference type="InterPro" id="IPR054158">
    <property type="entry name" value="RNR-II_ins_dom"/>
</dbReference>
<dbReference type="InterPro" id="IPR040763">
    <property type="entry name" value="RNR_alpha_hel"/>
</dbReference>
<dbReference type="InterPro" id="IPR013345">
    <property type="entry name" value="RTP_Rdtase_AdoCbl-dep"/>
</dbReference>
<dbReference type="NCBIfam" id="TIGR02505">
    <property type="entry name" value="RTPR"/>
    <property type="match status" value="1"/>
</dbReference>
<dbReference type="PANTHER" id="PTHR43371:SF1">
    <property type="entry name" value="RIBONUCLEOSIDE-DIPHOSPHATE REDUCTASE"/>
    <property type="match status" value="1"/>
</dbReference>
<dbReference type="PANTHER" id="PTHR43371">
    <property type="entry name" value="VITAMIN B12-DEPENDENT RIBONUCLEOTIDE REDUCTASE"/>
    <property type="match status" value="1"/>
</dbReference>
<dbReference type="Pfam" id="PF21995">
    <property type="entry name" value="RNR-II_ins_dom"/>
    <property type="match status" value="1"/>
</dbReference>
<dbReference type="Pfam" id="PF17975">
    <property type="entry name" value="RNR_Alpha"/>
    <property type="match status" value="1"/>
</dbReference>
<dbReference type="SUPFAM" id="SSF51998">
    <property type="entry name" value="PFL-like glycyl radical enzymes"/>
    <property type="match status" value="1"/>
</dbReference>
<sequence>MNTATQASVSLTPEFIAATEKEITPHWGELGWVTYKRTYARWLPEQQRNEEWPETVKRVVEGNINLDPRLQADTVTPEVLTELTTEAQNLFRLIYGLAATPSGRNLWISGTDYQHRNGDALNNCWFIAVRPQAYGDSHILPSYLTQDQVAVSMPFSFMFDQLMKGGGVGFSVTPNNVHQMPVVDQTVDLTIVIDPESASYADSVALGAVNRSEWMHDNSLADVRFYRLPDTREGWVLANANMMDAHFNSTNPEKKTKVVLDISDIRPKNAPIHGFGGTASGPMPLVEMLFDINQILNNAVGRQLTAVDCTDMGNMIGKTVVAGNVRRSAELALGGAEDDAFITMKQDKDQLYHHRWASNNSVAVDSDFTDYAPIADSIQHNGEPGIVNLGLSRNYGRLIDGRQEGIDEAVEGTNPCGEISLSNGEPCNLFEVFPSVAEEQGWQLEDAFGLGARYTKRVTFSHYDWEVSRKAIQKNRRIGVSMSGIQDWILKTFKQRVVTGFEAKHDAETGKTFMQPIYNQAAVNRFNALYQAVVKADQDYSDTLGCQPSIKHTTVKPSGTVAKLAGVSEGMHFHYARYLIQRIRFQDSDPLLPALKASGYKVEPDVYSQNTMCVEFPVKAAHADEPAFASAGEVSMAEQFATQAFLQTYWSDNAVSCTVTFQPEEGQDISDLLLQYRHTIKSTSLLPYSGADFKQAPKEPIDAATYDAKCQEITADVAEKFAAMTGNHDQKDIELVDQSDCESGACPIR</sequence>
<reference key="1">
    <citation type="journal article" date="2006" name="Proc. Natl. Acad. Sci. U.S.A.">
        <title>Comparative genomics of the lactic acid bacteria.</title>
        <authorList>
            <person name="Makarova K.S."/>
            <person name="Slesarev A."/>
            <person name="Wolf Y.I."/>
            <person name="Sorokin A."/>
            <person name="Mirkin B."/>
            <person name="Koonin E.V."/>
            <person name="Pavlov A."/>
            <person name="Pavlova N."/>
            <person name="Karamychev V."/>
            <person name="Polouchine N."/>
            <person name="Shakhova V."/>
            <person name="Grigoriev I."/>
            <person name="Lou Y."/>
            <person name="Rohksar D."/>
            <person name="Lucas S."/>
            <person name="Huang K."/>
            <person name="Goodstein D.M."/>
            <person name="Hawkins T."/>
            <person name="Plengvidhya V."/>
            <person name="Welker D."/>
            <person name="Hughes J."/>
            <person name="Goh Y."/>
            <person name="Benson A."/>
            <person name="Baldwin K."/>
            <person name="Lee J.-H."/>
            <person name="Diaz-Muniz I."/>
            <person name="Dosti B."/>
            <person name="Smeianov V."/>
            <person name="Wechter W."/>
            <person name="Barabote R."/>
            <person name="Lorca G."/>
            <person name="Altermann E."/>
            <person name="Barrangou R."/>
            <person name="Ganesan B."/>
            <person name="Xie Y."/>
            <person name="Rawsthorne H."/>
            <person name="Tamir D."/>
            <person name="Parker C."/>
            <person name="Breidt F."/>
            <person name="Broadbent J.R."/>
            <person name="Hutkins R."/>
            <person name="O'Sullivan D."/>
            <person name="Steele J."/>
            <person name="Unlu G."/>
            <person name="Saier M.H. Jr."/>
            <person name="Klaenhammer T."/>
            <person name="Richardson P."/>
            <person name="Kozyavkin S."/>
            <person name="Weimer B.C."/>
            <person name="Mills D.A."/>
        </authorList>
    </citation>
    <scope>NUCLEOTIDE SEQUENCE [LARGE SCALE GENOMIC DNA]</scope>
    <source>
        <strain>ATCC 367 / BCRC 12310 / CIP 105137 / JCM 1170 / LMG 11437 / NCIMB 947 / NCTC 947</strain>
    </source>
</reference>
<comment type="catalytic activity">
    <reaction>
        <text>a 2'-deoxyribonucleoside 5'-triphosphate + [thioredoxin]-disulfide + H2O = a ribonucleoside 5'-triphosphate + [thioredoxin]-dithiol</text>
        <dbReference type="Rhea" id="RHEA:12701"/>
        <dbReference type="Rhea" id="RHEA-COMP:10698"/>
        <dbReference type="Rhea" id="RHEA-COMP:10700"/>
        <dbReference type="ChEBI" id="CHEBI:15377"/>
        <dbReference type="ChEBI" id="CHEBI:29950"/>
        <dbReference type="ChEBI" id="CHEBI:50058"/>
        <dbReference type="ChEBI" id="CHEBI:61557"/>
        <dbReference type="ChEBI" id="CHEBI:61560"/>
        <dbReference type="EC" id="1.17.4.2"/>
    </reaction>
</comment>
<comment type="cofactor">
    <cofactor evidence="1">
        <name>adenosylcob(III)alamin</name>
        <dbReference type="ChEBI" id="CHEBI:18408"/>
    </cofactor>
</comment>
<comment type="activity regulation">
    <text evidence="1">Allosterically regulated by ATP and dNTP.</text>
</comment>
<comment type="subunit">
    <text evidence="1">Monomer.</text>
</comment>
<comment type="similarity">
    <text evidence="2">Belongs to the class II ribonucleoside-triphosphate reductase family.</text>
</comment>
<feature type="chain" id="PRO_0000326537" description="Adenosylcobalamin-dependent ribonucleoside-triphosphate reductase">
    <location>
        <begin position="1"/>
        <end position="749"/>
    </location>
</feature>
<feature type="region of interest" description="Effector region-1" evidence="1">
    <location>
        <begin position="152"/>
        <end position="163"/>
    </location>
</feature>
<feature type="region of interest" description="Effector region-2" evidence="1">
    <location>
        <begin position="173"/>
        <end position="321"/>
    </location>
</feature>
<feature type="region of interest" description="Adenosylcobalamin-binding-1" evidence="1">
    <location>
        <begin position="573"/>
        <end position="634"/>
    </location>
</feature>
<feature type="region of interest" description="Adenosylcobalamin-binding-2" evidence="1">
    <location>
        <begin position="693"/>
        <end position="734"/>
    </location>
</feature>
<feature type="active site" evidence="1">
    <location>
        <position position="416"/>
    </location>
</feature>
<feature type="active site" evidence="1">
    <location>
        <position position="418"/>
    </location>
</feature>
<feature type="disulfide bond" description="Redox-active" evidence="1">
    <location>
        <begin position="124"/>
        <end position="427"/>
    </location>
</feature>
<organism>
    <name type="scientific">Levilactobacillus brevis (strain ATCC 367 / BCRC 12310 / CIP 105137 / JCM 1170 / LMG 11437 / NCIMB 947 / NCTC 947)</name>
    <name type="common">Lactobacillus brevis</name>
    <dbReference type="NCBI Taxonomy" id="387344"/>
    <lineage>
        <taxon>Bacteria</taxon>
        <taxon>Bacillati</taxon>
        <taxon>Bacillota</taxon>
        <taxon>Bacilli</taxon>
        <taxon>Lactobacillales</taxon>
        <taxon>Lactobacillaceae</taxon>
        <taxon>Levilactobacillus</taxon>
    </lineage>
</organism>
<protein>
    <recommendedName>
        <fullName>Adenosylcobalamin-dependent ribonucleoside-triphosphate reductase</fullName>
        <shortName>RTPR</shortName>
        <ecNumber>1.17.4.2</ecNumber>
    </recommendedName>
</protein>
<keyword id="KW-0021">Allosteric enzyme</keyword>
<keyword id="KW-0846">Cobalamin</keyword>
<keyword id="KW-0170">Cobalt</keyword>
<keyword id="KW-1015">Disulfide bond</keyword>
<keyword id="KW-0235">DNA replication</keyword>
<keyword id="KW-0560">Oxidoreductase</keyword>
<keyword id="KW-0676">Redox-active center</keyword>
<keyword id="KW-1185">Reference proteome</keyword>
<accession>Q03PB4</accession>